<accession>Q8Y0J4</accession>
<evidence type="ECO:0000255" key="1">
    <source>
        <dbReference type="HAMAP-Rule" id="MF_01815"/>
    </source>
</evidence>
<organism>
    <name type="scientific">Ralstonia nicotianae (strain ATCC BAA-1114 / GMI1000)</name>
    <name type="common">Ralstonia solanacearum</name>
    <dbReference type="NCBI Taxonomy" id="267608"/>
    <lineage>
        <taxon>Bacteria</taxon>
        <taxon>Pseudomonadati</taxon>
        <taxon>Pseudomonadota</taxon>
        <taxon>Betaproteobacteria</taxon>
        <taxon>Burkholderiales</taxon>
        <taxon>Burkholderiaceae</taxon>
        <taxon>Ralstonia</taxon>
        <taxon>Ralstonia solanacearum species complex</taxon>
    </lineage>
</organism>
<gene>
    <name evidence="1" type="primary">fabH</name>
    <name type="ordered locus">RSc1050</name>
    <name type="ORF">RS04180</name>
</gene>
<reference key="1">
    <citation type="journal article" date="2002" name="Nature">
        <title>Genome sequence of the plant pathogen Ralstonia solanacearum.</title>
        <authorList>
            <person name="Salanoubat M."/>
            <person name="Genin S."/>
            <person name="Artiguenave F."/>
            <person name="Gouzy J."/>
            <person name="Mangenot S."/>
            <person name="Arlat M."/>
            <person name="Billault A."/>
            <person name="Brottier P."/>
            <person name="Camus J.-C."/>
            <person name="Cattolico L."/>
            <person name="Chandler M."/>
            <person name="Choisne N."/>
            <person name="Claudel-Renard C."/>
            <person name="Cunnac S."/>
            <person name="Demange N."/>
            <person name="Gaspin C."/>
            <person name="Lavie M."/>
            <person name="Moisan A."/>
            <person name="Robert C."/>
            <person name="Saurin W."/>
            <person name="Schiex T."/>
            <person name="Siguier P."/>
            <person name="Thebault P."/>
            <person name="Whalen M."/>
            <person name="Wincker P."/>
            <person name="Levy M."/>
            <person name="Weissenbach J."/>
            <person name="Boucher C.A."/>
        </authorList>
    </citation>
    <scope>NUCLEOTIDE SEQUENCE [LARGE SCALE GENOMIC DNA]</scope>
    <source>
        <strain>ATCC BAA-1114 / GMI1000</strain>
    </source>
</reference>
<feature type="chain" id="PRO_0000110456" description="Beta-ketoacyl-[acyl-carrier-protein] synthase III">
    <location>
        <begin position="1"/>
        <end position="326"/>
    </location>
</feature>
<feature type="region of interest" description="ACP-binding" evidence="1">
    <location>
        <begin position="254"/>
        <end position="258"/>
    </location>
</feature>
<feature type="active site" evidence="1">
    <location>
        <position position="120"/>
    </location>
</feature>
<feature type="active site" evidence="1">
    <location>
        <position position="253"/>
    </location>
</feature>
<feature type="active site" evidence="1">
    <location>
        <position position="283"/>
    </location>
</feature>
<name>FABH_RALN1</name>
<sequence length="326" mass="34435">MTRYARIIGTGSYLPPKRVTNHELAAQLAEQGIETSDEWIVTRSGIRARHYAEPDVTCSDLAAKAAERAIEAAGIDRAEIDLILVATSTPDFVFPSAACLVQQKLGLSNHCAAFDLQAVCSGFVYGLATADKFIRAGGYRNALVIGAEVFSRILDFNDRTTCVLFGDGAGAVVLQASDEPGILSTALHADGSHADILCVPGNVAGGAIKGSAFLYMDGQAVFKLAVNVLDKVAREALALAEVESSQIDWLIPHQANIRIMQGTAKKLGLPGERMVVTVDEHGNTSAASIPLALDAAVRDGRIQKGHHVLLEGVGGGFTWGAALLRF</sequence>
<proteinExistence type="inferred from homology"/>
<protein>
    <recommendedName>
        <fullName evidence="1">Beta-ketoacyl-[acyl-carrier-protein] synthase III</fullName>
        <shortName evidence="1">Beta-ketoacyl-ACP synthase III</shortName>
        <shortName evidence="1">KAS III</shortName>
        <ecNumber evidence="1">2.3.1.180</ecNumber>
    </recommendedName>
    <alternativeName>
        <fullName evidence="1">3-oxoacyl-[acyl-carrier-protein] synthase 3</fullName>
    </alternativeName>
    <alternativeName>
        <fullName evidence="1">3-oxoacyl-[acyl-carrier-protein] synthase III</fullName>
    </alternativeName>
</protein>
<dbReference type="EC" id="2.3.1.180" evidence="1"/>
<dbReference type="EMBL" id="AL646052">
    <property type="protein sequence ID" value="CAD14752.1"/>
    <property type="molecule type" value="Genomic_DNA"/>
</dbReference>
<dbReference type="RefSeq" id="WP_011001002.1">
    <property type="nucleotide sequence ID" value="NC_003295.1"/>
</dbReference>
<dbReference type="SMR" id="Q8Y0J4"/>
<dbReference type="STRING" id="267608.RSc1050"/>
<dbReference type="EnsemblBacteria" id="CAD14752">
    <property type="protein sequence ID" value="CAD14752"/>
    <property type="gene ID" value="RSc1050"/>
</dbReference>
<dbReference type="KEGG" id="rso:RSc1050"/>
<dbReference type="PATRIC" id="fig|267608.8.peg.1068"/>
<dbReference type="eggNOG" id="COG0332">
    <property type="taxonomic scope" value="Bacteria"/>
</dbReference>
<dbReference type="HOGENOM" id="CLU_039592_3_1_4"/>
<dbReference type="UniPathway" id="UPA00094"/>
<dbReference type="Proteomes" id="UP000001436">
    <property type="component" value="Chromosome"/>
</dbReference>
<dbReference type="GO" id="GO:0005737">
    <property type="term" value="C:cytoplasm"/>
    <property type="evidence" value="ECO:0007669"/>
    <property type="project" value="UniProtKB-SubCell"/>
</dbReference>
<dbReference type="GO" id="GO:0004315">
    <property type="term" value="F:3-oxoacyl-[acyl-carrier-protein] synthase activity"/>
    <property type="evidence" value="ECO:0007669"/>
    <property type="project" value="InterPro"/>
</dbReference>
<dbReference type="GO" id="GO:0033818">
    <property type="term" value="F:beta-ketoacyl-acyl-carrier-protein synthase III activity"/>
    <property type="evidence" value="ECO:0000315"/>
    <property type="project" value="CACAO"/>
</dbReference>
<dbReference type="GO" id="GO:0044579">
    <property type="term" value="P:butyryl-CoA biosynthetic process from acetyl-CoA"/>
    <property type="evidence" value="ECO:0000315"/>
    <property type="project" value="CACAO"/>
</dbReference>
<dbReference type="CDD" id="cd00830">
    <property type="entry name" value="KAS_III"/>
    <property type="match status" value="1"/>
</dbReference>
<dbReference type="FunFam" id="3.40.47.10:FF:000004">
    <property type="entry name" value="3-oxoacyl-[acyl-carrier-protein] synthase 3"/>
    <property type="match status" value="1"/>
</dbReference>
<dbReference type="Gene3D" id="3.40.47.10">
    <property type="match status" value="1"/>
</dbReference>
<dbReference type="HAMAP" id="MF_01815">
    <property type="entry name" value="FabH"/>
    <property type="match status" value="1"/>
</dbReference>
<dbReference type="InterPro" id="IPR013747">
    <property type="entry name" value="ACP_syn_III_C"/>
</dbReference>
<dbReference type="InterPro" id="IPR013751">
    <property type="entry name" value="ACP_syn_III_N"/>
</dbReference>
<dbReference type="InterPro" id="IPR004655">
    <property type="entry name" value="FabH"/>
</dbReference>
<dbReference type="InterPro" id="IPR016039">
    <property type="entry name" value="Thiolase-like"/>
</dbReference>
<dbReference type="NCBIfam" id="TIGR00747">
    <property type="entry name" value="fabH"/>
    <property type="match status" value="1"/>
</dbReference>
<dbReference type="NCBIfam" id="NF006829">
    <property type="entry name" value="PRK09352.1"/>
    <property type="match status" value="1"/>
</dbReference>
<dbReference type="PANTHER" id="PTHR43091">
    <property type="entry name" value="3-OXOACYL-[ACYL-CARRIER-PROTEIN] SYNTHASE"/>
    <property type="match status" value="1"/>
</dbReference>
<dbReference type="PANTHER" id="PTHR43091:SF1">
    <property type="entry name" value="BETA-KETOACYL-[ACYL-CARRIER-PROTEIN] SYNTHASE III, CHLOROPLASTIC"/>
    <property type="match status" value="1"/>
</dbReference>
<dbReference type="Pfam" id="PF08545">
    <property type="entry name" value="ACP_syn_III"/>
    <property type="match status" value="1"/>
</dbReference>
<dbReference type="Pfam" id="PF08541">
    <property type="entry name" value="ACP_syn_III_C"/>
    <property type="match status" value="1"/>
</dbReference>
<dbReference type="SUPFAM" id="SSF53901">
    <property type="entry name" value="Thiolase-like"/>
    <property type="match status" value="1"/>
</dbReference>
<keyword id="KW-0012">Acyltransferase</keyword>
<keyword id="KW-0963">Cytoplasm</keyword>
<keyword id="KW-0275">Fatty acid biosynthesis</keyword>
<keyword id="KW-0276">Fatty acid metabolism</keyword>
<keyword id="KW-0444">Lipid biosynthesis</keyword>
<keyword id="KW-0443">Lipid metabolism</keyword>
<keyword id="KW-0511">Multifunctional enzyme</keyword>
<keyword id="KW-1185">Reference proteome</keyword>
<keyword id="KW-0808">Transferase</keyword>
<comment type="function">
    <text evidence="1">Catalyzes the condensation reaction of fatty acid synthesis by the addition to an acyl acceptor of two carbons from malonyl-ACP. Catalyzes the first condensation reaction which initiates fatty acid synthesis and may therefore play a role in governing the total rate of fatty acid production. Possesses both acetoacetyl-ACP synthase and acetyl transacylase activities. Its substrate specificity determines the biosynthesis of branched-chain and/or straight-chain of fatty acids.</text>
</comment>
<comment type="catalytic activity">
    <reaction evidence="1">
        <text>malonyl-[ACP] + acetyl-CoA + H(+) = 3-oxobutanoyl-[ACP] + CO2 + CoA</text>
        <dbReference type="Rhea" id="RHEA:12080"/>
        <dbReference type="Rhea" id="RHEA-COMP:9623"/>
        <dbReference type="Rhea" id="RHEA-COMP:9625"/>
        <dbReference type="ChEBI" id="CHEBI:15378"/>
        <dbReference type="ChEBI" id="CHEBI:16526"/>
        <dbReference type="ChEBI" id="CHEBI:57287"/>
        <dbReference type="ChEBI" id="CHEBI:57288"/>
        <dbReference type="ChEBI" id="CHEBI:78449"/>
        <dbReference type="ChEBI" id="CHEBI:78450"/>
        <dbReference type="EC" id="2.3.1.180"/>
    </reaction>
</comment>
<comment type="pathway">
    <text evidence="1">Lipid metabolism; fatty acid biosynthesis.</text>
</comment>
<comment type="subunit">
    <text evidence="1">Homodimer.</text>
</comment>
<comment type="subcellular location">
    <subcellularLocation>
        <location evidence="1">Cytoplasm</location>
    </subcellularLocation>
</comment>
<comment type="domain">
    <text evidence="1">The last Arg residue of the ACP-binding site is essential for the weak association between ACP/AcpP and FabH.</text>
</comment>
<comment type="similarity">
    <text evidence="1">Belongs to the thiolase-like superfamily. FabH family.</text>
</comment>